<sequence length="280" mass="32857">MKYRFPKGMRPSTLRERESFYRYEFSLDRVEKWLGWRDIGNTAFAVIIGRHSDIYLPEYEDIKRKAVIIDEHKGLADVLDYILQYLPEGVYYDRNVYSDIKLCVERGCDYKNCWGCENFLGQELAFDIDPENVSCPYHGSIEDKMKRGEGLSFCMLEFKKVRKLTLSLYDELRAEYKKLRVVFSGRGFHIHVFDRKALKMSREERVELAKAYSHYAIDEWVTNGEMRLIRLPYSLNGLVSRICSPLSIEELPAFDPRNHSIPSFLLSSPRRSSRASSSRP</sequence>
<reference key="1">
    <citation type="journal article" date="1997" name="Nature">
        <title>The complete genome sequence of the hyperthermophilic, sulphate-reducing archaeon Archaeoglobus fulgidus.</title>
        <authorList>
            <person name="Klenk H.-P."/>
            <person name="Clayton R.A."/>
            <person name="Tomb J.-F."/>
            <person name="White O."/>
            <person name="Nelson K.E."/>
            <person name="Ketchum K.A."/>
            <person name="Dodson R.J."/>
            <person name="Gwinn M.L."/>
            <person name="Hickey E.K."/>
            <person name="Peterson J.D."/>
            <person name="Richardson D.L."/>
            <person name="Kerlavage A.R."/>
            <person name="Graham D.E."/>
            <person name="Kyrpides N.C."/>
            <person name="Fleischmann R.D."/>
            <person name="Quackenbush J."/>
            <person name="Lee N.H."/>
            <person name="Sutton G.G."/>
            <person name="Gill S.R."/>
            <person name="Kirkness E.F."/>
            <person name="Dougherty B.A."/>
            <person name="McKenney K."/>
            <person name="Adams M.D."/>
            <person name="Loftus B.J."/>
            <person name="Peterson S.N."/>
            <person name="Reich C.I."/>
            <person name="McNeil L.K."/>
            <person name="Badger J.H."/>
            <person name="Glodek A."/>
            <person name="Zhou L."/>
            <person name="Overbeek R."/>
            <person name="Gocayne J.D."/>
            <person name="Weidman J.F."/>
            <person name="McDonald L.A."/>
            <person name="Utterback T.R."/>
            <person name="Cotton M.D."/>
            <person name="Spriggs T."/>
            <person name="Artiach P."/>
            <person name="Kaine B.P."/>
            <person name="Sykes S.M."/>
            <person name="Sadow P.W."/>
            <person name="D'Andrea K.P."/>
            <person name="Bowman C."/>
            <person name="Fujii C."/>
            <person name="Garland S.A."/>
            <person name="Mason T.M."/>
            <person name="Olsen G.J."/>
            <person name="Fraser C.M."/>
            <person name="Smith H.O."/>
            <person name="Woese C.R."/>
            <person name="Venter J.C."/>
        </authorList>
    </citation>
    <scope>NUCLEOTIDE SEQUENCE [LARGE SCALE GENOMIC DNA]</scope>
    <source>
        <strain>ATCC 49558 / DSM 4304 / JCM 9628 / NBRC 100126 / VC-16</strain>
    </source>
</reference>
<gene>
    <name type="ordered locus">AF_2298</name>
</gene>
<accession>O27986</accession>
<proteinExistence type="inferred from homology"/>
<protein>
    <recommendedName>
        <fullName>Uncharacterized DNA primase small subunit-like protein AF_2298</fullName>
    </recommendedName>
</protein>
<evidence type="ECO:0000305" key="1"/>
<dbReference type="EMBL" id="AE000782">
    <property type="protein sequence ID" value="AAB88954.1"/>
    <property type="molecule type" value="Genomic_DNA"/>
</dbReference>
<dbReference type="PIR" id="B69537">
    <property type="entry name" value="B69537"/>
</dbReference>
<dbReference type="RefSeq" id="WP_010879787.1">
    <property type="nucleotide sequence ID" value="NC_000917.1"/>
</dbReference>
<dbReference type="SMR" id="O27986"/>
<dbReference type="STRING" id="224325.AF_2298"/>
<dbReference type="PaxDb" id="224325-AF_2298"/>
<dbReference type="EnsemblBacteria" id="AAB88954">
    <property type="protein sequence ID" value="AAB88954"/>
    <property type="gene ID" value="AF_2298"/>
</dbReference>
<dbReference type="KEGG" id="afu:AF_2298"/>
<dbReference type="eggNOG" id="arCOG04110">
    <property type="taxonomic scope" value="Archaea"/>
</dbReference>
<dbReference type="HOGENOM" id="CLU_1032907_0_0_2"/>
<dbReference type="OrthoDB" id="31125at2157"/>
<dbReference type="PhylomeDB" id="O27986"/>
<dbReference type="Proteomes" id="UP000002199">
    <property type="component" value="Chromosome"/>
</dbReference>
<dbReference type="GO" id="GO:0003899">
    <property type="term" value="F:DNA-directed RNA polymerase activity"/>
    <property type="evidence" value="ECO:0007669"/>
    <property type="project" value="InterPro"/>
</dbReference>
<dbReference type="GO" id="GO:0006269">
    <property type="term" value="P:DNA replication, synthesis of primer"/>
    <property type="evidence" value="ECO:0007669"/>
    <property type="project" value="InterPro"/>
</dbReference>
<dbReference type="Gene3D" id="3.90.920.10">
    <property type="entry name" value="DNA primase, PRIM domain"/>
    <property type="match status" value="1"/>
</dbReference>
<dbReference type="InterPro" id="IPR002755">
    <property type="entry name" value="DNA_primase_S"/>
</dbReference>
<dbReference type="PANTHER" id="PTHR10536">
    <property type="entry name" value="DNA PRIMASE SMALL SUBUNIT"/>
    <property type="match status" value="1"/>
</dbReference>
<dbReference type="Pfam" id="PF01896">
    <property type="entry name" value="DNA_primase_S"/>
    <property type="match status" value="1"/>
</dbReference>
<dbReference type="SUPFAM" id="SSF56747">
    <property type="entry name" value="Prim-pol domain"/>
    <property type="match status" value="1"/>
</dbReference>
<organism>
    <name type="scientific">Archaeoglobus fulgidus (strain ATCC 49558 / DSM 4304 / JCM 9628 / NBRC 100126 / VC-16)</name>
    <dbReference type="NCBI Taxonomy" id="224325"/>
    <lineage>
        <taxon>Archaea</taxon>
        <taxon>Methanobacteriati</taxon>
        <taxon>Methanobacteriota</taxon>
        <taxon>Archaeoglobi</taxon>
        <taxon>Archaeoglobales</taxon>
        <taxon>Archaeoglobaceae</taxon>
        <taxon>Archaeoglobus</taxon>
    </lineage>
</organism>
<comment type="similarity">
    <text evidence="1">Belongs to the eukaryotic-type primase small subunit family.</text>
</comment>
<feature type="chain" id="PRO_0000046758" description="Uncharacterized DNA primase small subunit-like protein AF_2298">
    <location>
        <begin position="1"/>
        <end position="280"/>
    </location>
</feature>
<keyword id="KW-1185">Reference proteome</keyword>
<name>Y2298_ARCFU</name>